<evidence type="ECO:0000250" key="1"/>
<evidence type="ECO:0000255" key="2">
    <source>
        <dbReference type="PROSITE-ProRule" id="PRU00404"/>
    </source>
</evidence>
<evidence type="ECO:0000256" key="3">
    <source>
        <dbReference type="SAM" id="MobiDB-lite"/>
    </source>
</evidence>
<evidence type="ECO:0000269" key="4">
    <source>
    </source>
</evidence>
<evidence type="ECO:0000269" key="5">
    <source>
    </source>
</evidence>
<evidence type="ECO:0000269" key="6">
    <source>
    </source>
</evidence>
<evidence type="ECO:0000305" key="7"/>
<evidence type="ECO:0007744" key="8">
    <source>
    </source>
</evidence>
<evidence type="ECO:0007829" key="9">
    <source>
        <dbReference type="PDB" id="5FJX"/>
    </source>
</evidence>
<evidence type="ECO:0007829" key="10">
    <source>
        <dbReference type="PDB" id="5FJZ"/>
    </source>
</evidence>
<proteinExistence type="evidence at protein level"/>
<organism>
    <name type="scientific">Saccharomyces cerevisiae (strain ATCC 204508 / S288c)</name>
    <name type="common">Baker's yeast</name>
    <dbReference type="NCBI Taxonomy" id="559292"/>
    <lineage>
        <taxon>Eukaryota</taxon>
        <taxon>Fungi</taxon>
        <taxon>Dikarya</taxon>
        <taxon>Ascomycota</taxon>
        <taxon>Saccharomycotina</taxon>
        <taxon>Saccharomycetes</taxon>
        <taxon>Saccharomycetales</taxon>
        <taxon>Saccharomycetaceae</taxon>
        <taxon>Saccharomyces</taxon>
    </lineage>
</organism>
<dbReference type="EMBL" id="D50617">
    <property type="protein sequence ID" value="BAA09290.1"/>
    <property type="molecule type" value="Genomic_DNA"/>
</dbReference>
<dbReference type="EMBL" id="BK006940">
    <property type="protein sequence ID" value="DAA12494.1"/>
    <property type="molecule type" value="Genomic_DNA"/>
</dbReference>
<dbReference type="PIR" id="S56306">
    <property type="entry name" value="S56306"/>
</dbReference>
<dbReference type="RefSeq" id="NP_116709.3">
    <property type="nucleotide sequence ID" value="NM_001180016.3"/>
</dbReference>
<dbReference type="PDB" id="5FJW">
    <property type="method" value="X-ray"/>
    <property type="resolution" value="2.80 A"/>
    <property type="chains" value="A/B/C/D/E/F/G/H=288-546"/>
</dbReference>
<dbReference type="PDB" id="5FJX">
    <property type="method" value="X-ray"/>
    <property type="resolution" value="2.45 A"/>
    <property type="chains" value="A/B/C=282-546"/>
</dbReference>
<dbReference type="PDB" id="5FJZ">
    <property type="method" value="X-ray"/>
    <property type="resolution" value="1.90 A"/>
    <property type="chains" value="A/B/C/D=282-546"/>
</dbReference>
<dbReference type="PDB" id="5FK0">
    <property type="method" value="X-ray"/>
    <property type="resolution" value="3.00 A"/>
    <property type="chains" value="A/B/C/D/E/F/G/H=282-546"/>
</dbReference>
<dbReference type="PDBsum" id="5FJW"/>
<dbReference type="PDBsum" id="5FJX"/>
<dbReference type="PDBsum" id="5FJZ"/>
<dbReference type="PDBsum" id="5FK0"/>
<dbReference type="SMR" id="P43621"/>
<dbReference type="BioGRID" id="31209">
    <property type="interactions" value="525"/>
</dbReference>
<dbReference type="ComplexPortal" id="CPX-1652">
    <property type="entry name" value="COPI vesicle coat complex"/>
</dbReference>
<dbReference type="DIP" id="DIP-5255N"/>
<dbReference type="FunCoup" id="P43621">
    <property type="interactions" value="1392"/>
</dbReference>
<dbReference type="IntAct" id="P43621">
    <property type="interactions" value="46"/>
</dbReference>
<dbReference type="MINT" id="P43621"/>
<dbReference type="STRING" id="4932.YFR051C"/>
<dbReference type="iPTMnet" id="P43621"/>
<dbReference type="PaxDb" id="4932-YFR051C"/>
<dbReference type="PeptideAtlas" id="P43621"/>
<dbReference type="EnsemblFungi" id="YFR051C_mRNA">
    <property type="protein sequence ID" value="YFR051C"/>
    <property type="gene ID" value="YFR051C"/>
</dbReference>
<dbReference type="GeneID" id="850612"/>
<dbReference type="KEGG" id="sce:YFR051C"/>
<dbReference type="AGR" id="SGD:S000001947"/>
<dbReference type="SGD" id="S000001947">
    <property type="gene designation" value="RET2"/>
</dbReference>
<dbReference type="VEuPathDB" id="FungiDB:YFR051C"/>
<dbReference type="eggNOG" id="KOG2635">
    <property type="taxonomic scope" value="Eukaryota"/>
</dbReference>
<dbReference type="GeneTree" id="ENSGT00390000017207"/>
<dbReference type="HOGENOM" id="CLU_019988_3_0_1"/>
<dbReference type="InParanoid" id="P43621"/>
<dbReference type="OMA" id="VQFRTHP"/>
<dbReference type="OrthoDB" id="10266042at2759"/>
<dbReference type="BioCyc" id="YEAST:G3O-30497-MONOMER"/>
<dbReference type="Reactome" id="R-SCE-6807878">
    <property type="pathway name" value="COPI-mediated anterograde transport"/>
</dbReference>
<dbReference type="Reactome" id="R-SCE-6811434">
    <property type="pathway name" value="COPI-dependent Golgi-to-ER retrograde traffic"/>
</dbReference>
<dbReference type="BioGRID-ORCS" id="850612">
    <property type="hits" value="10 hits in 10 CRISPR screens"/>
</dbReference>
<dbReference type="EvolutionaryTrace" id="P43621"/>
<dbReference type="PRO" id="PR:P43621"/>
<dbReference type="Proteomes" id="UP000002311">
    <property type="component" value="Chromosome VI"/>
</dbReference>
<dbReference type="RNAct" id="P43621">
    <property type="molecule type" value="protein"/>
</dbReference>
<dbReference type="GO" id="GO:0030126">
    <property type="term" value="C:COPI vesicle coat"/>
    <property type="evidence" value="ECO:0000314"/>
    <property type="project" value="SGD"/>
</dbReference>
<dbReference type="GO" id="GO:0000139">
    <property type="term" value="C:Golgi membrane"/>
    <property type="evidence" value="ECO:0007669"/>
    <property type="project" value="UniProtKB-SubCell"/>
</dbReference>
<dbReference type="GO" id="GO:0006888">
    <property type="term" value="P:endoplasmic reticulum to Golgi vesicle-mediated transport"/>
    <property type="evidence" value="ECO:0000315"/>
    <property type="project" value="SGD"/>
</dbReference>
<dbReference type="GO" id="GO:0090167">
    <property type="term" value="P:Golgi distribution to daughter cells"/>
    <property type="evidence" value="ECO:0000316"/>
    <property type="project" value="SGD"/>
</dbReference>
<dbReference type="GO" id="GO:0048313">
    <property type="term" value="P:Golgi inheritance"/>
    <property type="evidence" value="ECO:0000316"/>
    <property type="project" value="SGD"/>
</dbReference>
<dbReference type="GO" id="GO:0051645">
    <property type="term" value="P:Golgi localization"/>
    <property type="evidence" value="ECO:0000318"/>
    <property type="project" value="GO_Central"/>
</dbReference>
<dbReference type="GO" id="GO:0015031">
    <property type="term" value="P:protein transport"/>
    <property type="evidence" value="ECO:0007669"/>
    <property type="project" value="UniProtKB-KW"/>
</dbReference>
<dbReference type="GO" id="GO:0006890">
    <property type="term" value="P:retrograde vesicle-mediated transport, Golgi to endoplasmic reticulum"/>
    <property type="evidence" value="ECO:0000315"/>
    <property type="project" value="SGD"/>
</dbReference>
<dbReference type="CDD" id="cd09254">
    <property type="entry name" value="AP_delta-COPI_MHD"/>
    <property type="match status" value="1"/>
</dbReference>
<dbReference type="CDD" id="cd14830">
    <property type="entry name" value="Delta_COP_N"/>
    <property type="match status" value="1"/>
</dbReference>
<dbReference type="FunFam" id="2.60.40.1170:FF:000039">
    <property type="entry name" value="Coatomer subunit delta"/>
    <property type="match status" value="1"/>
</dbReference>
<dbReference type="FunFam" id="3.30.450.60:FF:000020">
    <property type="entry name" value="Coatomer subunit delta"/>
    <property type="match status" value="1"/>
</dbReference>
<dbReference type="Gene3D" id="3.30.450.60">
    <property type="match status" value="1"/>
</dbReference>
<dbReference type="Gene3D" id="2.60.40.1170">
    <property type="entry name" value="Mu homology domain, subdomain B"/>
    <property type="match status" value="2"/>
</dbReference>
<dbReference type="InterPro" id="IPR036168">
    <property type="entry name" value="AP2_Mu_C_sf"/>
</dbReference>
<dbReference type="InterPro" id="IPR022775">
    <property type="entry name" value="AP_mu_sigma_su"/>
</dbReference>
<dbReference type="InterPro" id="IPR027059">
    <property type="entry name" value="Coatomer_dsu"/>
</dbReference>
<dbReference type="InterPro" id="IPR011012">
    <property type="entry name" value="Longin-like_dom_sf"/>
</dbReference>
<dbReference type="InterPro" id="IPR028565">
    <property type="entry name" value="MHD"/>
</dbReference>
<dbReference type="PANTHER" id="PTHR10121">
    <property type="entry name" value="COATOMER SUBUNIT DELTA"/>
    <property type="match status" value="1"/>
</dbReference>
<dbReference type="PANTHER" id="PTHR10121:SF0">
    <property type="entry name" value="COATOMER SUBUNIT DELTA"/>
    <property type="match status" value="1"/>
</dbReference>
<dbReference type="Pfam" id="PF00928">
    <property type="entry name" value="Adap_comp_sub"/>
    <property type="match status" value="1"/>
</dbReference>
<dbReference type="Pfam" id="PF01217">
    <property type="entry name" value="Clat_adaptor_s"/>
    <property type="match status" value="1"/>
</dbReference>
<dbReference type="SUPFAM" id="SSF49447">
    <property type="entry name" value="Second domain of Mu2 adaptin subunit (ap50) of ap2 adaptor"/>
    <property type="match status" value="1"/>
</dbReference>
<dbReference type="SUPFAM" id="SSF64356">
    <property type="entry name" value="SNARE-like"/>
    <property type="match status" value="1"/>
</dbReference>
<dbReference type="PROSITE" id="PS51072">
    <property type="entry name" value="MHD"/>
    <property type="match status" value="1"/>
</dbReference>
<reference key="1">
    <citation type="journal article" date="1995" name="Nat. Genet.">
        <title>Analysis of the nucleotide sequence of chromosome VI from Saccharomyces cerevisiae.</title>
        <authorList>
            <person name="Murakami Y."/>
            <person name="Naitou M."/>
            <person name="Hagiwara H."/>
            <person name="Shibata T."/>
            <person name="Ozawa M."/>
            <person name="Sasanuma S."/>
            <person name="Sasanuma M."/>
            <person name="Tsuchiya Y."/>
            <person name="Soeda E."/>
            <person name="Yokoyama K."/>
            <person name="Yamazaki M."/>
            <person name="Tashiro H."/>
            <person name="Eki T."/>
        </authorList>
    </citation>
    <scope>NUCLEOTIDE SEQUENCE [LARGE SCALE GENOMIC DNA]</scope>
    <source>
        <strain>ATCC 204508 / S288c</strain>
    </source>
</reference>
<reference key="2">
    <citation type="journal article" date="2014" name="G3 (Bethesda)">
        <title>The reference genome sequence of Saccharomyces cerevisiae: Then and now.</title>
        <authorList>
            <person name="Engel S.R."/>
            <person name="Dietrich F.S."/>
            <person name="Fisk D.G."/>
            <person name="Binkley G."/>
            <person name="Balakrishnan R."/>
            <person name="Costanzo M.C."/>
            <person name="Dwight S.S."/>
            <person name="Hitz B.C."/>
            <person name="Karra K."/>
            <person name="Nash R.S."/>
            <person name="Weng S."/>
            <person name="Wong E.D."/>
            <person name="Lloyd P."/>
            <person name="Skrzypek M.S."/>
            <person name="Miyasato S.R."/>
            <person name="Simison M."/>
            <person name="Cherry J.M."/>
        </authorList>
    </citation>
    <scope>GENOME REANNOTATION</scope>
    <source>
        <strain>ATCC 204508 / S288c</strain>
    </source>
</reference>
<reference key="3">
    <citation type="journal article" date="1996" name="Yeast">
        <title>Analysis of a 36.2 kb DNA sequence including the right telomere of chromosome VI from Saccharomyces cerevisiae.</title>
        <authorList>
            <person name="Eki T."/>
            <person name="Naitou M."/>
            <person name="Hagiwara H."/>
            <person name="Ozawa M."/>
            <person name="Sasanuma S."/>
            <person name="Sasanuma M."/>
            <person name="Tsuchiya Y."/>
            <person name="Shibata T."/>
            <person name="Hanaoka F."/>
            <person name="Murakami Y."/>
        </authorList>
    </citation>
    <scope>NUCLEOTIDE SEQUENCE [GENOMIC DNA]</scope>
    <source>
        <strain>ATCC 204511 / S288c / AB972</strain>
    </source>
</reference>
<reference key="4">
    <citation type="journal article" date="1996" name="EMBO J.">
        <title>Delta- and zeta-COP, two coatomer subunits homologous to clathrin-associated proteins, are involved in ER retrieval.</title>
        <authorList>
            <person name="Cosson P."/>
            <person name="Demolliere C."/>
            <person name="Hennecke S."/>
            <person name="Duden R."/>
            <person name="Letourneur F."/>
        </authorList>
    </citation>
    <scope>PROTEIN SEQUENCE OF 2-15</scope>
    <scope>CHARACTERIZATION</scope>
</reference>
<reference key="5">
    <citation type="journal article" date="2003" name="J. Biol. Chem.">
        <title>Dsl1p, an essential component of the Golgi-endoplasmic reticulum retrieval system in yeast, uses the same sequence motif to interact with different subunits of the COPI vesicle coat.</title>
        <authorList>
            <person name="Andag U."/>
            <person name="Schmitt H.D."/>
        </authorList>
    </citation>
    <scope>INTERACTION WITH DSL1</scope>
</reference>
<reference key="6">
    <citation type="journal article" date="2003" name="Nature">
        <title>Global analysis of protein expression in yeast.</title>
        <authorList>
            <person name="Ghaemmaghami S."/>
            <person name="Huh W.-K."/>
            <person name="Bower K."/>
            <person name="Howson R.W."/>
            <person name="Belle A."/>
            <person name="Dephoure N."/>
            <person name="O'Shea E.K."/>
            <person name="Weissman J.S."/>
        </authorList>
    </citation>
    <scope>LEVEL OF PROTEIN EXPRESSION [LARGE SCALE ANALYSIS]</scope>
</reference>
<reference key="7">
    <citation type="journal article" date="2008" name="Mol. Cell. Proteomics">
        <title>A multidimensional chromatography technology for in-depth phosphoproteome analysis.</title>
        <authorList>
            <person name="Albuquerque C.P."/>
            <person name="Smolka M.B."/>
            <person name="Payne S.H."/>
            <person name="Bafna V."/>
            <person name="Eng J."/>
            <person name="Zhou H."/>
        </authorList>
    </citation>
    <scope>PHOSPHORYLATION [LARGE SCALE ANALYSIS] AT THR-277</scope>
    <scope>IDENTIFICATION BY MASS SPECTROMETRY [LARGE SCALE ANALYSIS]</scope>
</reference>
<accession>P43621</accession>
<accession>D6VTT4</accession>
<protein>
    <recommendedName>
        <fullName>Coatomer subunit delta</fullName>
    </recommendedName>
    <alternativeName>
        <fullName>Delta-coat protein</fullName>
        <shortName>Delta-COP</shortName>
    </alternativeName>
</protein>
<sequence length="546" mass="60628">MVVLAASITTRQGKPLLSRQFKDLSKDRVLELLSNFQNLVSEISSDHTFVEDKHVRYVYRPFDNYYIILITNRQSNIIKDLATLNLFSQTINSYLSSFQDQEIFHNAFEILSSFDEIVSMGGYKENLSFTQVQTYLSMESHEERIQEIIERNKEIEATEERKRRAKEIARKEHERKHGFMSSNGDYDGANRFMGSKDPNVTNAINSYYSHASPAAQQSYLQSSHAAAAEVAPVASPMATSQRAGHSATGGMKLGGGAGRRAGAAPRPSAISSASSGTPPPPEEDVPENNGILISIKEVINAEFSRDGTIHSSELKGVLELRINDHDLSHSNLKLADSIDVRDKSFQFKTHPNIDKQSFLSTKLISLRDKSKAFPANDQSLGVLRWRKVAPAEDDSLIPLTLTTWVSPSESQQGFDVIIEYESVLETELADVIFTIPVFPQEPVDINTESSTCSDAEVVNMDQEMGTSIKISKIAANDAGALAFTIEAPYEDALYPMTVSFQESTRDKLAKSFTGMAIQSVVMANDHDQELPYDVITSLKSDEYLVQ</sequence>
<name>COPD_YEAST</name>
<comment type="function">
    <text evidence="1">The coatomer is a cytosolic protein complex that binds to dilysine motifs and reversibly associates with Golgi non-clathrin-coated vesicles, which further mediate biosynthetic protein transport from the ER, via the Golgi up to the trans Golgi network. Coatomer complex is required for budding from Golgi membranes, and is essential for the retrograde Golgi-to-ER transport of dilysine-tagged proteins (By similarity).</text>
</comment>
<comment type="subunit">
    <text evidence="4">Oligomeric complex that consists of at least the alpha, beta, beta', gamma, delta, epsilon and zeta subunits. Interacts with DSL1.</text>
</comment>
<comment type="interaction">
    <interactant intactId="EBI-4876">
        <id>P43621</id>
    </interactant>
    <interactant intactId="EBI-4905">
        <id>P53600</id>
        <label>RET3</label>
    </interactant>
    <organismsDiffer>false</organismsDiffer>
    <experiments>3</experiments>
</comment>
<comment type="subcellular location">
    <subcellularLocation>
        <location evidence="1">Cytoplasm</location>
    </subcellularLocation>
    <subcellularLocation>
        <location evidence="1">Golgi apparatus membrane</location>
        <topology evidence="1">Peripheral membrane protein</topology>
        <orientation evidence="1">Cytoplasmic side</orientation>
    </subcellularLocation>
    <subcellularLocation>
        <location evidence="1">Cytoplasmic vesicle</location>
        <location evidence="1">COPI-coated vesicle membrane</location>
        <topology evidence="1">Peripheral membrane protein</topology>
        <orientation evidence="1">Cytoplasmic side</orientation>
    </subcellularLocation>
    <text evidence="1">The coatomer is cytoplasmic or polymerized on the cytoplasmic side of the Golgi, as well as on the vesicles/buds originating from it.</text>
</comment>
<comment type="miscellaneous">
    <text evidence="5">Present with 18000 molecules/cell in log phase SD medium.</text>
</comment>
<comment type="similarity">
    <text evidence="7">Belongs to the adaptor complexes medium subunit family. Delta-COP subfamily.</text>
</comment>
<keyword id="KW-0002">3D-structure</keyword>
<keyword id="KW-0963">Cytoplasm</keyword>
<keyword id="KW-0968">Cytoplasmic vesicle</keyword>
<keyword id="KW-0903">Direct protein sequencing</keyword>
<keyword id="KW-0931">ER-Golgi transport</keyword>
<keyword id="KW-0333">Golgi apparatus</keyword>
<keyword id="KW-0472">Membrane</keyword>
<keyword id="KW-0597">Phosphoprotein</keyword>
<keyword id="KW-0653">Protein transport</keyword>
<keyword id="KW-1185">Reference proteome</keyword>
<keyword id="KW-0813">Transport</keyword>
<feature type="initiator methionine" description="Removed" evidence="6">
    <location>
        <position position="1"/>
    </location>
</feature>
<feature type="chain" id="PRO_0000193848" description="Coatomer subunit delta">
    <location>
        <begin position="2"/>
        <end position="546"/>
    </location>
</feature>
<feature type="domain" description="MHD" evidence="2">
    <location>
        <begin position="288"/>
        <end position="546"/>
    </location>
</feature>
<feature type="region of interest" description="Interaction with DSL1" evidence="4">
    <location>
        <begin position="190"/>
        <end position="440"/>
    </location>
</feature>
<feature type="region of interest" description="Disordered" evidence="3">
    <location>
        <begin position="236"/>
        <end position="287"/>
    </location>
</feature>
<feature type="compositionally biased region" description="Low complexity" evidence="3">
    <location>
        <begin position="260"/>
        <end position="276"/>
    </location>
</feature>
<feature type="modified residue" description="Phosphothreonine" evidence="8">
    <location>
        <position position="277"/>
    </location>
</feature>
<feature type="strand" evidence="10">
    <location>
        <begin position="289"/>
        <end position="303"/>
    </location>
</feature>
<feature type="strand" evidence="10">
    <location>
        <begin position="309"/>
        <end position="322"/>
    </location>
</feature>
<feature type="helix" evidence="10">
    <location>
        <begin position="325"/>
        <end position="327"/>
    </location>
</feature>
<feature type="strand" evidence="10">
    <location>
        <begin position="328"/>
        <end position="334"/>
    </location>
</feature>
<feature type="helix" evidence="10">
    <location>
        <begin position="343"/>
        <end position="345"/>
    </location>
</feature>
<feature type="helix" evidence="10">
    <location>
        <begin position="355"/>
        <end position="361"/>
    </location>
</feature>
<feature type="strand" evidence="10">
    <location>
        <begin position="362"/>
        <end position="364"/>
    </location>
</feature>
<feature type="strand" evidence="10">
    <location>
        <begin position="366"/>
        <end position="368"/>
    </location>
</feature>
<feature type="strand" evidence="10">
    <location>
        <begin position="380"/>
        <end position="389"/>
    </location>
</feature>
<feature type="strand" evidence="10">
    <location>
        <begin position="398"/>
        <end position="407"/>
    </location>
</feature>
<feature type="strand" evidence="10">
    <location>
        <begin position="409"/>
        <end position="422"/>
    </location>
</feature>
<feature type="strand" evidence="10">
    <location>
        <begin position="428"/>
        <end position="436"/>
    </location>
</feature>
<feature type="helix" evidence="10">
    <location>
        <begin position="447"/>
        <end position="449"/>
    </location>
</feature>
<feature type="turn" evidence="9">
    <location>
        <begin position="451"/>
        <end position="454"/>
    </location>
</feature>
<feature type="strand" evidence="10">
    <location>
        <begin position="456"/>
        <end position="458"/>
    </location>
</feature>
<feature type="strand" evidence="10">
    <location>
        <begin position="463"/>
        <end position="473"/>
    </location>
</feature>
<feature type="strand" evidence="10">
    <location>
        <begin position="478"/>
        <end position="486"/>
    </location>
</feature>
<feature type="helix" evidence="10">
    <location>
        <begin position="490"/>
        <end position="493"/>
    </location>
</feature>
<feature type="strand" evidence="10">
    <location>
        <begin position="495"/>
        <end position="499"/>
    </location>
</feature>
<feature type="strand" evidence="10">
    <location>
        <begin position="501"/>
        <end position="505"/>
    </location>
</feature>
<feature type="strand" evidence="10">
    <location>
        <begin position="517"/>
        <end position="524"/>
    </location>
</feature>
<feature type="strand" evidence="9">
    <location>
        <begin position="525"/>
        <end position="529"/>
    </location>
</feature>
<feature type="strand" evidence="10">
    <location>
        <begin position="533"/>
        <end position="545"/>
    </location>
</feature>
<gene>
    <name type="primary">RET2</name>
    <name type="ordered locus">YFR051C</name>
</gene>